<organism>
    <name type="scientific">Nitrosomonas eutropha (strain DSM 101675 / C91 / Nm57)</name>
    <dbReference type="NCBI Taxonomy" id="335283"/>
    <lineage>
        <taxon>Bacteria</taxon>
        <taxon>Pseudomonadati</taxon>
        <taxon>Pseudomonadota</taxon>
        <taxon>Betaproteobacteria</taxon>
        <taxon>Nitrosomonadales</taxon>
        <taxon>Nitrosomonadaceae</taxon>
        <taxon>Nitrosomonas</taxon>
    </lineage>
</organism>
<keyword id="KW-0028">Amino-acid biosynthesis</keyword>
<keyword id="KW-0963">Cytoplasm</keyword>
<keyword id="KW-0368">Histidine biosynthesis</keyword>
<keyword id="KW-0378">Hydrolase</keyword>
<keyword id="KW-0460">Magnesium</keyword>
<keyword id="KW-0479">Metal-binding</keyword>
<keyword id="KW-0862">Zinc</keyword>
<evidence type="ECO:0000255" key="1">
    <source>
        <dbReference type="HAMAP-Rule" id="MF_01021"/>
    </source>
</evidence>
<dbReference type="EC" id="3.5.4.19" evidence="1"/>
<dbReference type="EMBL" id="CP000450">
    <property type="protein sequence ID" value="ABI60142.1"/>
    <property type="molecule type" value="Genomic_DNA"/>
</dbReference>
<dbReference type="RefSeq" id="WP_011634944.1">
    <property type="nucleotide sequence ID" value="NC_008344.1"/>
</dbReference>
<dbReference type="SMR" id="Q0AEU0"/>
<dbReference type="STRING" id="335283.Neut_1910"/>
<dbReference type="KEGG" id="net:Neut_1910"/>
<dbReference type="eggNOG" id="COG0139">
    <property type="taxonomic scope" value="Bacteria"/>
</dbReference>
<dbReference type="HOGENOM" id="CLU_048577_5_0_4"/>
<dbReference type="OrthoDB" id="9795769at2"/>
<dbReference type="UniPathway" id="UPA00031">
    <property type="reaction ID" value="UER00008"/>
</dbReference>
<dbReference type="Proteomes" id="UP000001966">
    <property type="component" value="Chromosome"/>
</dbReference>
<dbReference type="GO" id="GO:0005737">
    <property type="term" value="C:cytoplasm"/>
    <property type="evidence" value="ECO:0007669"/>
    <property type="project" value="UniProtKB-SubCell"/>
</dbReference>
<dbReference type="GO" id="GO:0000287">
    <property type="term" value="F:magnesium ion binding"/>
    <property type="evidence" value="ECO:0007669"/>
    <property type="project" value="UniProtKB-UniRule"/>
</dbReference>
<dbReference type="GO" id="GO:0004635">
    <property type="term" value="F:phosphoribosyl-AMP cyclohydrolase activity"/>
    <property type="evidence" value="ECO:0007669"/>
    <property type="project" value="UniProtKB-UniRule"/>
</dbReference>
<dbReference type="GO" id="GO:0008270">
    <property type="term" value="F:zinc ion binding"/>
    <property type="evidence" value="ECO:0007669"/>
    <property type="project" value="UniProtKB-UniRule"/>
</dbReference>
<dbReference type="GO" id="GO:0000105">
    <property type="term" value="P:L-histidine biosynthetic process"/>
    <property type="evidence" value="ECO:0007669"/>
    <property type="project" value="UniProtKB-UniRule"/>
</dbReference>
<dbReference type="FunFam" id="3.10.20.810:FF:000001">
    <property type="entry name" value="Histidine biosynthesis bifunctional protein HisIE"/>
    <property type="match status" value="1"/>
</dbReference>
<dbReference type="Gene3D" id="3.10.20.810">
    <property type="entry name" value="Phosphoribosyl-AMP cyclohydrolase"/>
    <property type="match status" value="1"/>
</dbReference>
<dbReference type="HAMAP" id="MF_01021">
    <property type="entry name" value="HisI"/>
    <property type="match status" value="1"/>
</dbReference>
<dbReference type="InterPro" id="IPR026660">
    <property type="entry name" value="PRA-CH"/>
</dbReference>
<dbReference type="InterPro" id="IPR002496">
    <property type="entry name" value="PRib_AMP_CycHydrolase_dom"/>
</dbReference>
<dbReference type="InterPro" id="IPR038019">
    <property type="entry name" value="PRib_AMP_CycHydrolase_sf"/>
</dbReference>
<dbReference type="NCBIfam" id="NF000768">
    <property type="entry name" value="PRK00051.1"/>
    <property type="match status" value="1"/>
</dbReference>
<dbReference type="PANTHER" id="PTHR42945">
    <property type="entry name" value="HISTIDINE BIOSYNTHESIS BIFUNCTIONAL PROTEIN"/>
    <property type="match status" value="1"/>
</dbReference>
<dbReference type="PANTHER" id="PTHR42945:SF1">
    <property type="entry name" value="HISTIDINE BIOSYNTHESIS BIFUNCTIONAL PROTEIN HIS7"/>
    <property type="match status" value="1"/>
</dbReference>
<dbReference type="Pfam" id="PF01502">
    <property type="entry name" value="PRA-CH"/>
    <property type="match status" value="1"/>
</dbReference>
<dbReference type="SUPFAM" id="SSF141734">
    <property type="entry name" value="HisI-like"/>
    <property type="match status" value="1"/>
</dbReference>
<reference key="1">
    <citation type="journal article" date="2007" name="Environ. Microbiol.">
        <title>Whole-genome analysis of the ammonia-oxidizing bacterium, Nitrosomonas eutropha C91: implications for niche adaptation.</title>
        <authorList>
            <person name="Stein L.Y."/>
            <person name="Arp D.J."/>
            <person name="Berube P.M."/>
            <person name="Chain P.S."/>
            <person name="Hauser L."/>
            <person name="Jetten M.S."/>
            <person name="Klotz M.G."/>
            <person name="Larimer F.W."/>
            <person name="Norton J.M."/>
            <person name="Op den Camp H.J.M."/>
            <person name="Shin M."/>
            <person name="Wei X."/>
        </authorList>
    </citation>
    <scope>NUCLEOTIDE SEQUENCE [LARGE SCALE GENOMIC DNA]</scope>
    <source>
        <strain>DSM 101675 / C91 / Nm57</strain>
    </source>
</reference>
<gene>
    <name evidence="1" type="primary">hisI</name>
    <name type="ordered locus">Neut_1910</name>
</gene>
<proteinExistence type="inferred from homology"/>
<feature type="chain" id="PRO_1000063421" description="Phosphoribosyl-AMP cyclohydrolase">
    <location>
        <begin position="1"/>
        <end position="129"/>
    </location>
</feature>
<feature type="binding site" evidence="1">
    <location>
        <position position="78"/>
    </location>
    <ligand>
        <name>Mg(2+)</name>
        <dbReference type="ChEBI" id="CHEBI:18420"/>
    </ligand>
</feature>
<feature type="binding site" evidence="1">
    <location>
        <position position="79"/>
    </location>
    <ligand>
        <name>Zn(2+)</name>
        <dbReference type="ChEBI" id="CHEBI:29105"/>
        <note>ligand shared between dimeric partners</note>
    </ligand>
</feature>
<feature type="binding site" evidence="1">
    <location>
        <position position="80"/>
    </location>
    <ligand>
        <name>Mg(2+)</name>
        <dbReference type="ChEBI" id="CHEBI:18420"/>
    </ligand>
</feature>
<feature type="binding site" evidence="1">
    <location>
        <position position="82"/>
    </location>
    <ligand>
        <name>Mg(2+)</name>
        <dbReference type="ChEBI" id="CHEBI:18420"/>
    </ligand>
</feature>
<feature type="binding site" evidence="1">
    <location>
        <position position="96"/>
    </location>
    <ligand>
        <name>Zn(2+)</name>
        <dbReference type="ChEBI" id="CHEBI:29105"/>
        <note>ligand shared between dimeric partners</note>
    </ligand>
</feature>
<feature type="binding site" evidence="1">
    <location>
        <position position="103"/>
    </location>
    <ligand>
        <name>Zn(2+)</name>
        <dbReference type="ChEBI" id="CHEBI:29105"/>
        <note>ligand shared between dimeric partners</note>
    </ligand>
</feature>
<protein>
    <recommendedName>
        <fullName evidence="1">Phosphoribosyl-AMP cyclohydrolase</fullName>
        <shortName evidence="1">PRA-CH</shortName>
        <ecNumber evidence="1">3.5.4.19</ecNumber>
    </recommendedName>
</protein>
<comment type="function">
    <text evidence="1">Catalyzes the hydrolysis of the adenine ring of phosphoribosyl-AMP.</text>
</comment>
<comment type="catalytic activity">
    <reaction evidence="1">
        <text>1-(5-phospho-beta-D-ribosyl)-5'-AMP + H2O = 1-(5-phospho-beta-D-ribosyl)-5-[(5-phospho-beta-D-ribosylamino)methylideneamino]imidazole-4-carboxamide</text>
        <dbReference type="Rhea" id="RHEA:20049"/>
        <dbReference type="ChEBI" id="CHEBI:15377"/>
        <dbReference type="ChEBI" id="CHEBI:58435"/>
        <dbReference type="ChEBI" id="CHEBI:59457"/>
        <dbReference type="EC" id="3.5.4.19"/>
    </reaction>
</comment>
<comment type="cofactor">
    <cofactor evidence="1">
        <name>Mg(2+)</name>
        <dbReference type="ChEBI" id="CHEBI:18420"/>
    </cofactor>
    <text evidence="1">Binds 1 Mg(2+) ion per subunit.</text>
</comment>
<comment type="cofactor">
    <cofactor evidence="1">
        <name>Zn(2+)</name>
        <dbReference type="ChEBI" id="CHEBI:29105"/>
    </cofactor>
    <text evidence="1">Binds 1 zinc ion per subunit.</text>
</comment>
<comment type="pathway">
    <text evidence="1">Amino-acid biosynthesis; L-histidine biosynthesis; L-histidine from 5-phospho-alpha-D-ribose 1-diphosphate: step 3/9.</text>
</comment>
<comment type="subunit">
    <text evidence="1">Homodimer.</text>
</comment>
<comment type="subcellular location">
    <subcellularLocation>
        <location evidence="1">Cytoplasm</location>
    </subcellularLocation>
</comment>
<comment type="similarity">
    <text evidence="1">Belongs to the PRA-CH family.</text>
</comment>
<name>HIS3_NITEC</name>
<sequence>MTDEWLDTINWSVDGLIPVIAQDENGGKILMVAWMNRDALKRTVETGEAVYWSRSRKKLWHKGEESGHTQIVQAIHLDCDKDVLLLSVEQKGGIACHTGRQSCFFRQLKNGEWVITEPVIKDPSQIYTQ</sequence>
<accession>Q0AEU0</accession>